<proteinExistence type="evidence at transcript level"/>
<dbReference type="EC" id="3.1.13.4"/>
<dbReference type="EMBL" id="AL137082">
    <property type="protein sequence ID" value="CAB68194.1"/>
    <property type="status" value="ALT_SEQ"/>
    <property type="molecule type" value="Genomic_DNA"/>
</dbReference>
<dbReference type="EMBL" id="CP002686">
    <property type="protein sequence ID" value="AEE79799.1"/>
    <property type="molecule type" value="Genomic_DNA"/>
</dbReference>
<dbReference type="EMBL" id="AF462845">
    <property type="protein sequence ID" value="AAL58932.1"/>
    <property type="molecule type" value="mRNA"/>
</dbReference>
<dbReference type="EMBL" id="AY133538">
    <property type="protein sequence ID" value="AAM91368.1"/>
    <property type="molecule type" value="mRNA"/>
</dbReference>
<dbReference type="PIR" id="T45676">
    <property type="entry name" value="T45676"/>
</dbReference>
<dbReference type="RefSeq" id="NP_191415.2">
    <property type="nucleotide sequence ID" value="NM_115718.4"/>
</dbReference>
<dbReference type="SMR" id="Q8W0Z9"/>
<dbReference type="BioGRID" id="10340">
    <property type="interactions" value="9"/>
</dbReference>
<dbReference type="FunCoup" id="Q8W0Z9">
    <property type="interactions" value="4163"/>
</dbReference>
<dbReference type="IntAct" id="Q8W0Z9">
    <property type="interactions" value="10"/>
</dbReference>
<dbReference type="STRING" id="3702.Q8W0Z9"/>
<dbReference type="iPTMnet" id="Q8W0Z9"/>
<dbReference type="PaxDb" id="3702-AT3G58560.1"/>
<dbReference type="ProteomicsDB" id="223933"/>
<dbReference type="EnsemblPlants" id="AT3G58560.1">
    <property type="protein sequence ID" value="AT3G58560.1"/>
    <property type="gene ID" value="AT3G58560"/>
</dbReference>
<dbReference type="GeneID" id="825025"/>
<dbReference type="Gramene" id="AT3G58560.1">
    <property type="protein sequence ID" value="AT3G58560.1"/>
    <property type="gene ID" value="AT3G58560"/>
</dbReference>
<dbReference type="KEGG" id="ath:AT3G58560"/>
<dbReference type="Araport" id="AT3G58560"/>
<dbReference type="TAIR" id="AT3G58560">
    <property type="gene designation" value="ATCCR4A"/>
</dbReference>
<dbReference type="eggNOG" id="KOG0620">
    <property type="taxonomic scope" value="Eukaryota"/>
</dbReference>
<dbReference type="HOGENOM" id="CLU_016428_5_0_1"/>
<dbReference type="InParanoid" id="Q8W0Z9"/>
<dbReference type="OMA" id="FRLKSAC"/>
<dbReference type="OrthoDB" id="428734at2759"/>
<dbReference type="PhylomeDB" id="Q8W0Z9"/>
<dbReference type="PRO" id="PR:Q8W0Z9"/>
<dbReference type="Proteomes" id="UP000006548">
    <property type="component" value="Chromosome 3"/>
</dbReference>
<dbReference type="ExpressionAtlas" id="Q8W0Z9">
    <property type="expression patterns" value="baseline and differential"/>
</dbReference>
<dbReference type="GO" id="GO:0005634">
    <property type="term" value="C:nucleus"/>
    <property type="evidence" value="ECO:0007669"/>
    <property type="project" value="UniProtKB-SubCell"/>
</dbReference>
<dbReference type="GO" id="GO:0000932">
    <property type="term" value="C:P-body"/>
    <property type="evidence" value="ECO:0000353"/>
    <property type="project" value="TAIR"/>
</dbReference>
<dbReference type="GO" id="GO:0046872">
    <property type="term" value="F:metal ion binding"/>
    <property type="evidence" value="ECO:0007669"/>
    <property type="project" value="UniProtKB-KW"/>
</dbReference>
<dbReference type="GO" id="GO:0004535">
    <property type="term" value="F:poly(A)-specific ribonuclease activity"/>
    <property type="evidence" value="ECO:0007669"/>
    <property type="project" value="UniProtKB-EC"/>
</dbReference>
<dbReference type="GO" id="GO:0003723">
    <property type="term" value="F:RNA binding"/>
    <property type="evidence" value="ECO:0007669"/>
    <property type="project" value="UniProtKB-KW"/>
</dbReference>
<dbReference type="GO" id="GO:0006397">
    <property type="term" value="P:mRNA processing"/>
    <property type="evidence" value="ECO:0000316"/>
    <property type="project" value="TAIR"/>
</dbReference>
<dbReference type="GO" id="GO:0019252">
    <property type="term" value="P:starch biosynthetic process"/>
    <property type="evidence" value="ECO:0000316"/>
    <property type="project" value="TAIR"/>
</dbReference>
<dbReference type="GO" id="GO:0005986">
    <property type="term" value="P:sucrose biosynthetic process"/>
    <property type="evidence" value="ECO:0000316"/>
    <property type="project" value="TAIR"/>
</dbReference>
<dbReference type="CDD" id="cd09097">
    <property type="entry name" value="Deadenylase_CCR4"/>
    <property type="match status" value="1"/>
</dbReference>
<dbReference type="FunFam" id="3.60.10.10:FF:000016">
    <property type="entry name" value="Carbon catabolite repressor protein 4 1"/>
    <property type="match status" value="1"/>
</dbReference>
<dbReference type="Gene3D" id="3.60.10.10">
    <property type="entry name" value="Endonuclease/exonuclease/phosphatase"/>
    <property type="match status" value="1"/>
</dbReference>
<dbReference type="InterPro" id="IPR050410">
    <property type="entry name" value="CCR4/nocturin_mRNA_transcr"/>
</dbReference>
<dbReference type="InterPro" id="IPR036691">
    <property type="entry name" value="Endo/exonu/phosph_ase_sf"/>
</dbReference>
<dbReference type="InterPro" id="IPR005135">
    <property type="entry name" value="Endo/exonuclease/phosphatase"/>
</dbReference>
<dbReference type="PANTHER" id="PTHR12121">
    <property type="entry name" value="CARBON CATABOLITE REPRESSOR PROTEIN 4"/>
    <property type="match status" value="1"/>
</dbReference>
<dbReference type="PANTHER" id="PTHR12121:SF34">
    <property type="entry name" value="PROTEIN ANGEL"/>
    <property type="match status" value="1"/>
</dbReference>
<dbReference type="Pfam" id="PF03372">
    <property type="entry name" value="Exo_endo_phos"/>
    <property type="match status" value="1"/>
</dbReference>
<dbReference type="SUPFAM" id="SSF56219">
    <property type="entry name" value="DNase I-like"/>
    <property type="match status" value="1"/>
</dbReference>
<comment type="function">
    <text evidence="1">Acts as a catalytic component of the CCR4-NOT core complex, which in the nucleus seems to be a general transcription factor, and in the cytoplasm the major mRNA deadenylase involved in mRNA turnover.</text>
</comment>
<comment type="catalytic activity">
    <reaction>
        <text>Exonucleolytic cleavage of poly(A) to 5'-AMP.</text>
        <dbReference type="EC" id="3.1.13.4"/>
    </reaction>
</comment>
<comment type="cofactor">
    <cofactor evidence="1">
        <name>Mg(2+)</name>
        <dbReference type="ChEBI" id="CHEBI:18420"/>
    </cofactor>
</comment>
<comment type="subunit">
    <text evidence="1">Component of the CCR4-NOT complex, at least composed of CRR4 and CAF1 proteins.</text>
</comment>
<comment type="subcellular location">
    <subcellularLocation>
        <location evidence="1">Nucleus</location>
    </subcellularLocation>
    <subcellularLocation>
        <location evidence="1">Cytoplasm</location>
    </subcellularLocation>
</comment>
<comment type="similarity">
    <text evidence="4">Belongs to the CCR4/nocturin family.</text>
</comment>
<comment type="sequence caution" evidence="4">
    <conflict type="erroneous gene model prediction">
        <sequence resource="EMBL-CDS" id="CAB68194"/>
    </conflict>
</comment>
<reference key="1">
    <citation type="journal article" date="2000" name="Nature">
        <title>Sequence and analysis of chromosome 3 of the plant Arabidopsis thaliana.</title>
        <authorList>
            <person name="Salanoubat M."/>
            <person name="Lemcke K."/>
            <person name="Rieger M."/>
            <person name="Ansorge W."/>
            <person name="Unseld M."/>
            <person name="Fartmann B."/>
            <person name="Valle G."/>
            <person name="Bloecker H."/>
            <person name="Perez-Alonso M."/>
            <person name="Obermaier B."/>
            <person name="Delseny M."/>
            <person name="Boutry M."/>
            <person name="Grivell L.A."/>
            <person name="Mache R."/>
            <person name="Puigdomenech P."/>
            <person name="De Simone V."/>
            <person name="Choisne N."/>
            <person name="Artiguenave F."/>
            <person name="Robert C."/>
            <person name="Brottier P."/>
            <person name="Wincker P."/>
            <person name="Cattolico L."/>
            <person name="Weissenbach J."/>
            <person name="Saurin W."/>
            <person name="Quetier F."/>
            <person name="Schaefer M."/>
            <person name="Mueller-Auer S."/>
            <person name="Gabel C."/>
            <person name="Fuchs M."/>
            <person name="Benes V."/>
            <person name="Wurmbach E."/>
            <person name="Drzonek H."/>
            <person name="Erfle H."/>
            <person name="Jordan N."/>
            <person name="Bangert S."/>
            <person name="Wiedelmann R."/>
            <person name="Kranz H."/>
            <person name="Voss H."/>
            <person name="Holland R."/>
            <person name="Brandt P."/>
            <person name="Nyakatura G."/>
            <person name="Vezzi A."/>
            <person name="D'Angelo M."/>
            <person name="Pallavicini A."/>
            <person name="Toppo S."/>
            <person name="Simionati B."/>
            <person name="Conrad A."/>
            <person name="Hornischer K."/>
            <person name="Kauer G."/>
            <person name="Loehnert T.-H."/>
            <person name="Nordsiek G."/>
            <person name="Reichelt J."/>
            <person name="Scharfe M."/>
            <person name="Schoen O."/>
            <person name="Bargues M."/>
            <person name="Terol J."/>
            <person name="Climent J."/>
            <person name="Navarro P."/>
            <person name="Collado C."/>
            <person name="Perez-Perez A."/>
            <person name="Ottenwaelder B."/>
            <person name="Duchemin D."/>
            <person name="Cooke R."/>
            <person name="Laudie M."/>
            <person name="Berger-Llauro C."/>
            <person name="Purnelle B."/>
            <person name="Masuy D."/>
            <person name="de Haan M."/>
            <person name="Maarse A.C."/>
            <person name="Alcaraz J.-P."/>
            <person name="Cottet A."/>
            <person name="Casacuberta E."/>
            <person name="Monfort A."/>
            <person name="Argiriou A."/>
            <person name="Flores M."/>
            <person name="Liguori R."/>
            <person name="Vitale D."/>
            <person name="Mannhaupt G."/>
            <person name="Haase D."/>
            <person name="Schoof H."/>
            <person name="Rudd S."/>
            <person name="Zaccaria P."/>
            <person name="Mewes H.-W."/>
            <person name="Mayer K.F.X."/>
            <person name="Kaul S."/>
            <person name="Town C.D."/>
            <person name="Koo H.L."/>
            <person name="Tallon L.J."/>
            <person name="Jenkins J."/>
            <person name="Rooney T."/>
            <person name="Rizzo M."/>
            <person name="Walts A."/>
            <person name="Utterback T."/>
            <person name="Fujii C.Y."/>
            <person name="Shea T.P."/>
            <person name="Creasy T.H."/>
            <person name="Haas B."/>
            <person name="Maiti R."/>
            <person name="Wu D."/>
            <person name="Peterson J."/>
            <person name="Van Aken S."/>
            <person name="Pai G."/>
            <person name="Militscher J."/>
            <person name="Sellers P."/>
            <person name="Gill J.E."/>
            <person name="Feldblyum T.V."/>
            <person name="Preuss D."/>
            <person name="Lin X."/>
            <person name="Nierman W.C."/>
            <person name="Salzberg S.L."/>
            <person name="White O."/>
            <person name="Venter J.C."/>
            <person name="Fraser C.M."/>
            <person name="Kaneko T."/>
            <person name="Nakamura Y."/>
            <person name="Sato S."/>
            <person name="Kato T."/>
            <person name="Asamizu E."/>
            <person name="Sasamoto S."/>
            <person name="Kimura T."/>
            <person name="Idesawa K."/>
            <person name="Kawashima K."/>
            <person name="Kishida Y."/>
            <person name="Kiyokawa C."/>
            <person name="Kohara M."/>
            <person name="Matsumoto M."/>
            <person name="Matsuno A."/>
            <person name="Muraki A."/>
            <person name="Nakayama S."/>
            <person name="Nakazaki N."/>
            <person name="Shinpo S."/>
            <person name="Takeuchi C."/>
            <person name="Wada T."/>
            <person name="Watanabe A."/>
            <person name="Yamada M."/>
            <person name="Yasuda M."/>
            <person name="Tabata S."/>
        </authorList>
    </citation>
    <scope>NUCLEOTIDE SEQUENCE [LARGE SCALE GENOMIC DNA]</scope>
    <source>
        <strain>cv. Columbia</strain>
    </source>
</reference>
<reference key="2">
    <citation type="journal article" date="2017" name="Plant J.">
        <title>Araport11: a complete reannotation of the Arabidopsis thaliana reference genome.</title>
        <authorList>
            <person name="Cheng C.Y."/>
            <person name="Krishnakumar V."/>
            <person name="Chan A.P."/>
            <person name="Thibaud-Nissen F."/>
            <person name="Schobel S."/>
            <person name="Town C.D."/>
        </authorList>
    </citation>
    <scope>GENOME REANNOTATION</scope>
    <source>
        <strain>cv. Columbia</strain>
    </source>
</reference>
<reference key="3">
    <citation type="journal article" date="2003" name="Science">
        <title>Empirical analysis of transcriptional activity in the Arabidopsis genome.</title>
        <authorList>
            <person name="Yamada K."/>
            <person name="Lim J."/>
            <person name="Dale J.M."/>
            <person name="Chen H."/>
            <person name="Shinn P."/>
            <person name="Palm C.J."/>
            <person name="Southwick A.M."/>
            <person name="Wu H.C."/>
            <person name="Kim C.J."/>
            <person name="Nguyen M."/>
            <person name="Pham P.K."/>
            <person name="Cheuk R.F."/>
            <person name="Karlin-Newmann G."/>
            <person name="Liu S.X."/>
            <person name="Lam B."/>
            <person name="Sakano H."/>
            <person name="Wu T."/>
            <person name="Yu G."/>
            <person name="Miranda M."/>
            <person name="Quach H.L."/>
            <person name="Tripp M."/>
            <person name="Chang C.H."/>
            <person name="Lee J.M."/>
            <person name="Toriumi M.J."/>
            <person name="Chan M.M."/>
            <person name="Tang C.C."/>
            <person name="Onodera C.S."/>
            <person name="Deng J.M."/>
            <person name="Akiyama K."/>
            <person name="Ansari Y."/>
            <person name="Arakawa T."/>
            <person name="Banh J."/>
            <person name="Banno F."/>
            <person name="Bowser L."/>
            <person name="Brooks S.Y."/>
            <person name="Carninci P."/>
            <person name="Chao Q."/>
            <person name="Choy N."/>
            <person name="Enju A."/>
            <person name="Goldsmith A.D."/>
            <person name="Gurjal M."/>
            <person name="Hansen N.F."/>
            <person name="Hayashizaki Y."/>
            <person name="Johnson-Hopson C."/>
            <person name="Hsuan V.W."/>
            <person name="Iida K."/>
            <person name="Karnes M."/>
            <person name="Khan S."/>
            <person name="Koesema E."/>
            <person name="Ishida J."/>
            <person name="Jiang P.X."/>
            <person name="Jones T."/>
            <person name="Kawai J."/>
            <person name="Kamiya A."/>
            <person name="Meyers C."/>
            <person name="Nakajima M."/>
            <person name="Narusaka M."/>
            <person name="Seki M."/>
            <person name="Sakurai T."/>
            <person name="Satou M."/>
            <person name="Tamse R."/>
            <person name="Vaysberg M."/>
            <person name="Wallender E.K."/>
            <person name="Wong C."/>
            <person name="Yamamura Y."/>
            <person name="Yuan S."/>
            <person name="Shinozaki K."/>
            <person name="Davis R.W."/>
            <person name="Theologis A."/>
            <person name="Ecker J.R."/>
        </authorList>
    </citation>
    <scope>NUCLEOTIDE SEQUENCE [LARGE SCALE MRNA]</scope>
    <source>
        <strain>cv. Columbia</strain>
    </source>
</reference>
<evidence type="ECO:0000250" key="1"/>
<evidence type="ECO:0000250" key="2">
    <source>
        <dbReference type="UniProtKB" id="O95551"/>
    </source>
</evidence>
<evidence type="ECO:0000256" key="3">
    <source>
        <dbReference type="SAM" id="MobiDB-lite"/>
    </source>
</evidence>
<evidence type="ECO:0000305" key="4"/>
<accession>Q8W0Z9</accession>
<accession>Q9M2G0</accession>
<sequence length="602" mass="66761">MLSVIRVHLPSEIPIVGCELTPYVLLRRPDKTPSTDDVPESAPLEGHFLKYRWFRVQSDKKVAICSVHPSETATLQCLGCLKSKVPVAKSYHCSTKCFSDAWQHHRVLHERAASAATEGNDEEELPRLNSSGSGSGVLSTSVSLTNGSSSVYPSAITQKTGAGGETLVEVGRSKTYTPMADDICHVLKFECVVVNAETKQNVGLSCTILTSRVIPAPSPSPRRLISISGTDVTGHLDSNGRPLSMGTFTVLSYNILSDTYASSDIYSYCPTWALAWTYRRQNLLREIVKYRADIVCLQEVQNDHFEEFFLPELDKHGYQGLFKRKTNEVFIGNTNTIDGCATFFRRDRFSHVKKYEVEFNKAAQSLTEAIIPVSQKKNALNRLVKDNVALIVVLEAKFGSQAADNPGKRQLLCVANTHVNVPHELKDVKLWQVHTLLKGLEKIAASADIPMLVCGDFNTVPASAPHTLLAVGKVDPLHPDLMVDPLGILRPHSKLTHQLPLVSAYSQFAKMGGNVITEQQRRRLDPASSEPLFTNCTRDFIGTLDYIFYTADTLTVESLLELLDEESLRKDTALPSPEWSSDHIALLAEFRCMPRARRNNIL</sequence>
<organism>
    <name type="scientific">Arabidopsis thaliana</name>
    <name type="common">Mouse-ear cress</name>
    <dbReference type="NCBI Taxonomy" id="3702"/>
    <lineage>
        <taxon>Eukaryota</taxon>
        <taxon>Viridiplantae</taxon>
        <taxon>Streptophyta</taxon>
        <taxon>Embryophyta</taxon>
        <taxon>Tracheophyta</taxon>
        <taxon>Spermatophyta</taxon>
        <taxon>Magnoliopsida</taxon>
        <taxon>eudicotyledons</taxon>
        <taxon>Gunneridae</taxon>
        <taxon>Pentapetalae</taxon>
        <taxon>rosids</taxon>
        <taxon>malvids</taxon>
        <taxon>Brassicales</taxon>
        <taxon>Brassicaceae</taxon>
        <taxon>Camelineae</taxon>
        <taxon>Arabidopsis</taxon>
    </lineage>
</organism>
<keyword id="KW-0963">Cytoplasm</keyword>
<keyword id="KW-0269">Exonuclease</keyword>
<keyword id="KW-0378">Hydrolase</keyword>
<keyword id="KW-0460">Magnesium</keyword>
<keyword id="KW-0479">Metal-binding</keyword>
<keyword id="KW-0540">Nuclease</keyword>
<keyword id="KW-0539">Nucleus</keyword>
<keyword id="KW-1185">Reference proteome</keyword>
<keyword id="KW-0677">Repeat</keyword>
<keyword id="KW-0694">RNA-binding</keyword>
<keyword id="KW-0804">Transcription</keyword>
<keyword id="KW-0805">Transcription regulation</keyword>
<protein>
    <recommendedName>
        <fullName>Carbon catabolite repressor protein 4 homolog 1</fullName>
        <shortName>CCR4 homolog 1</shortName>
        <ecNumber>3.1.13.4</ecNumber>
    </recommendedName>
</protein>
<gene>
    <name type="primary">CCR4-1</name>
    <name type="ordered locus">At3g58560</name>
    <name type="ORF">F14P22.150</name>
</gene>
<name>CCR4A_ARATH</name>
<feature type="chain" id="PRO_0000355044" description="Carbon catabolite repressor protein 4 homolog 1">
    <location>
        <begin position="1"/>
        <end position="602"/>
    </location>
</feature>
<feature type="region of interest" description="Disordered" evidence="3">
    <location>
        <begin position="113"/>
        <end position="136"/>
    </location>
</feature>
<feature type="binding site" evidence="2">
    <location>
        <position position="299"/>
    </location>
    <ligand>
        <name>Mg(2+)</name>
        <dbReference type="ChEBI" id="CHEBI:18420"/>
    </ligand>
</feature>